<feature type="chain" id="PRO_0000181710" description="tRNA(Ile)-lysidine synthase">
    <location>
        <begin position="1"/>
        <end position="431"/>
    </location>
</feature>
<feature type="binding site" evidence="1">
    <location>
        <begin position="25"/>
        <end position="30"/>
    </location>
    <ligand>
        <name>ATP</name>
        <dbReference type="ChEBI" id="CHEBI:30616"/>
    </ligand>
</feature>
<organism>
    <name type="scientific">Legionella pneumophila (strain Paris)</name>
    <dbReference type="NCBI Taxonomy" id="297246"/>
    <lineage>
        <taxon>Bacteria</taxon>
        <taxon>Pseudomonadati</taxon>
        <taxon>Pseudomonadota</taxon>
        <taxon>Gammaproteobacteria</taxon>
        <taxon>Legionellales</taxon>
        <taxon>Legionellaceae</taxon>
        <taxon>Legionella</taxon>
    </lineage>
</organism>
<gene>
    <name evidence="1" type="primary">tilS</name>
    <name type="ordered locus">lpp0850</name>
</gene>
<proteinExistence type="inferred from homology"/>
<keyword id="KW-0067">ATP-binding</keyword>
<keyword id="KW-0963">Cytoplasm</keyword>
<keyword id="KW-0436">Ligase</keyword>
<keyword id="KW-0547">Nucleotide-binding</keyword>
<keyword id="KW-0819">tRNA processing</keyword>
<sequence length="431" mass="49200">MTRPLLSPEWVARLKQFKKLIVGFSGGLDSTVLLHVLASTPPLSNQLLAVHINHGISGNSLNWQRHCEQLCLDLGIAFIAKAIEFDRSANVEEAARNARYDFFSSLLEDNDCLVLGHHLDDQAETVLLQLFRGAGVDGLAAMQECSNLGAGQLARPFLTCPRVELEHYARIHELKWIEDESNQDTKYSRNYLRHRVMPLLLEKWPGVAGNISRAATHCQQAKANLEVLAIKDCPDLLNATDHLLIEPIKGLEFERITNVLKFWLKKNRIQLPSSKTFHRIIHEIIFAKLDAMPTVSWNQIQVRRFQQHLYLLKADQINLPKAIKWQQFPASLTYPDADIKLSAVKAQKGLMIPKDAQIEIRFRKGGEEIYWHGQTKHLKKLFQEWQIPPWVRDRVPLVYINDQLACVVGYAVSDLFFTTNPLEAWSIVNNS</sequence>
<accession>Q5X6W4</accession>
<dbReference type="EC" id="6.3.4.19" evidence="1"/>
<dbReference type="EMBL" id="CR628336">
    <property type="protein sequence ID" value="CAH12000.1"/>
    <property type="molecule type" value="Genomic_DNA"/>
</dbReference>
<dbReference type="RefSeq" id="WP_011213315.1">
    <property type="nucleotide sequence ID" value="NC_006368.1"/>
</dbReference>
<dbReference type="SMR" id="Q5X6W4"/>
<dbReference type="GeneID" id="57034776"/>
<dbReference type="KEGG" id="lpp:lpp0850"/>
<dbReference type="LegioList" id="lpp0850"/>
<dbReference type="HOGENOM" id="CLU_018869_2_0_6"/>
<dbReference type="GO" id="GO:0005737">
    <property type="term" value="C:cytoplasm"/>
    <property type="evidence" value="ECO:0007669"/>
    <property type="project" value="UniProtKB-SubCell"/>
</dbReference>
<dbReference type="GO" id="GO:0005524">
    <property type="term" value="F:ATP binding"/>
    <property type="evidence" value="ECO:0007669"/>
    <property type="project" value="UniProtKB-UniRule"/>
</dbReference>
<dbReference type="GO" id="GO:0032267">
    <property type="term" value="F:tRNA(Ile)-lysidine synthase activity"/>
    <property type="evidence" value="ECO:0007669"/>
    <property type="project" value="UniProtKB-EC"/>
</dbReference>
<dbReference type="GO" id="GO:0006400">
    <property type="term" value="P:tRNA modification"/>
    <property type="evidence" value="ECO:0007669"/>
    <property type="project" value="UniProtKB-UniRule"/>
</dbReference>
<dbReference type="CDD" id="cd01992">
    <property type="entry name" value="TilS_N"/>
    <property type="match status" value="1"/>
</dbReference>
<dbReference type="Gene3D" id="1.20.59.20">
    <property type="match status" value="1"/>
</dbReference>
<dbReference type="Gene3D" id="3.40.50.620">
    <property type="entry name" value="HUPs"/>
    <property type="match status" value="1"/>
</dbReference>
<dbReference type="HAMAP" id="MF_01161">
    <property type="entry name" value="tRNA_Ile_lys_synt"/>
    <property type="match status" value="1"/>
</dbReference>
<dbReference type="InterPro" id="IPR012796">
    <property type="entry name" value="Lysidine-tRNA-synth_C"/>
</dbReference>
<dbReference type="InterPro" id="IPR014729">
    <property type="entry name" value="Rossmann-like_a/b/a_fold"/>
</dbReference>
<dbReference type="InterPro" id="IPR011063">
    <property type="entry name" value="TilS/TtcA_N"/>
</dbReference>
<dbReference type="InterPro" id="IPR012094">
    <property type="entry name" value="tRNA_Ile_lys_synt"/>
</dbReference>
<dbReference type="InterPro" id="IPR012795">
    <property type="entry name" value="tRNA_Ile_lys_synt_N"/>
</dbReference>
<dbReference type="InterPro" id="IPR015262">
    <property type="entry name" value="tRNA_Ile_lys_synt_subst-bd"/>
</dbReference>
<dbReference type="NCBIfam" id="TIGR02433">
    <property type="entry name" value="lysidine_TilS_C"/>
    <property type="match status" value="1"/>
</dbReference>
<dbReference type="NCBIfam" id="TIGR02432">
    <property type="entry name" value="lysidine_TilS_N"/>
    <property type="match status" value="1"/>
</dbReference>
<dbReference type="PANTHER" id="PTHR43033">
    <property type="entry name" value="TRNA(ILE)-LYSIDINE SYNTHASE-RELATED"/>
    <property type="match status" value="1"/>
</dbReference>
<dbReference type="PANTHER" id="PTHR43033:SF1">
    <property type="entry name" value="TRNA(ILE)-LYSIDINE SYNTHASE-RELATED"/>
    <property type="match status" value="1"/>
</dbReference>
<dbReference type="Pfam" id="PF01171">
    <property type="entry name" value="ATP_bind_3"/>
    <property type="match status" value="1"/>
</dbReference>
<dbReference type="Pfam" id="PF09179">
    <property type="entry name" value="TilS"/>
    <property type="match status" value="1"/>
</dbReference>
<dbReference type="Pfam" id="PF11734">
    <property type="entry name" value="TilS_C"/>
    <property type="match status" value="1"/>
</dbReference>
<dbReference type="SMART" id="SM00977">
    <property type="entry name" value="TilS_C"/>
    <property type="match status" value="1"/>
</dbReference>
<dbReference type="SUPFAM" id="SSF52402">
    <property type="entry name" value="Adenine nucleotide alpha hydrolases-like"/>
    <property type="match status" value="1"/>
</dbReference>
<dbReference type="SUPFAM" id="SSF82829">
    <property type="entry name" value="MesJ substrate recognition domain-like"/>
    <property type="match status" value="1"/>
</dbReference>
<dbReference type="SUPFAM" id="SSF56037">
    <property type="entry name" value="PheT/TilS domain"/>
    <property type="match status" value="1"/>
</dbReference>
<reference key="1">
    <citation type="journal article" date="2004" name="Nat. Genet.">
        <title>Evidence in the Legionella pneumophila genome for exploitation of host cell functions and high genome plasticity.</title>
        <authorList>
            <person name="Cazalet C."/>
            <person name="Rusniok C."/>
            <person name="Brueggemann H."/>
            <person name="Zidane N."/>
            <person name="Magnier A."/>
            <person name="Ma L."/>
            <person name="Tichit M."/>
            <person name="Jarraud S."/>
            <person name="Bouchier C."/>
            <person name="Vandenesch F."/>
            <person name="Kunst F."/>
            <person name="Etienne J."/>
            <person name="Glaser P."/>
            <person name="Buchrieser C."/>
        </authorList>
    </citation>
    <scope>NUCLEOTIDE SEQUENCE [LARGE SCALE GENOMIC DNA]</scope>
    <source>
        <strain>Paris</strain>
    </source>
</reference>
<comment type="function">
    <text evidence="1">Ligates lysine onto the cytidine present at position 34 of the AUA codon-specific tRNA(Ile) that contains the anticodon CAU, in an ATP-dependent manner. Cytidine is converted to lysidine, thus changing the amino acid specificity of the tRNA from methionine to isoleucine.</text>
</comment>
<comment type="catalytic activity">
    <reaction evidence="1">
        <text>cytidine(34) in tRNA(Ile2) + L-lysine + ATP = lysidine(34) in tRNA(Ile2) + AMP + diphosphate + H(+)</text>
        <dbReference type="Rhea" id="RHEA:43744"/>
        <dbReference type="Rhea" id="RHEA-COMP:10625"/>
        <dbReference type="Rhea" id="RHEA-COMP:10670"/>
        <dbReference type="ChEBI" id="CHEBI:15378"/>
        <dbReference type="ChEBI" id="CHEBI:30616"/>
        <dbReference type="ChEBI" id="CHEBI:32551"/>
        <dbReference type="ChEBI" id="CHEBI:33019"/>
        <dbReference type="ChEBI" id="CHEBI:82748"/>
        <dbReference type="ChEBI" id="CHEBI:83665"/>
        <dbReference type="ChEBI" id="CHEBI:456215"/>
        <dbReference type="EC" id="6.3.4.19"/>
    </reaction>
</comment>
<comment type="subcellular location">
    <subcellularLocation>
        <location evidence="1">Cytoplasm</location>
    </subcellularLocation>
</comment>
<comment type="domain">
    <text>The N-terminal region contains the highly conserved SGGXDS motif, predicted to be a P-loop motif involved in ATP binding.</text>
</comment>
<comment type="similarity">
    <text evidence="1">Belongs to the tRNA(Ile)-lysidine synthase family.</text>
</comment>
<protein>
    <recommendedName>
        <fullName evidence="1">tRNA(Ile)-lysidine synthase</fullName>
        <ecNumber evidence="1">6.3.4.19</ecNumber>
    </recommendedName>
    <alternativeName>
        <fullName evidence="1">tRNA(Ile)-2-lysyl-cytidine synthase</fullName>
    </alternativeName>
    <alternativeName>
        <fullName evidence="1">tRNA(Ile)-lysidine synthetase</fullName>
    </alternativeName>
</protein>
<name>TILS_LEGPA</name>
<evidence type="ECO:0000255" key="1">
    <source>
        <dbReference type="HAMAP-Rule" id="MF_01161"/>
    </source>
</evidence>